<feature type="chain" id="PRO_1000063397" description="Phosphoribosyl-AMP cyclohydrolase">
    <location>
        <begin position="1"/>
        <end position="137"/>
    </location>
</feature>
<feature type="binding site" evidence="1">
    <location>
        <position position="83"/>
    </location>
    <ligand>
        <name>Mg(2+)</name>
        <dbReference type="ChEBI" id="CHEBI:18420"/>
    </ligand>
</feature>
<feature type="binding site" evidence="1">
    <location>
        <position position="84"/>
    </location>
    <ligand>
        <name>Zn(2+)</name>
        <dbReference type="ChEBI" id="CHEBI:29105"/>
        <note>ligand shared between dimeric partners</note>
    </ligand>
</feature>
<feature type="binding site" evidence="1">
    <location>
        <position position="85"/>
    </location>
    <ligand>
        <name>Mg(2+)</name>
        <dbReference type="ChEBI" id="CHEBI:18420"/>
    </ligand>
</feature>
<feature type="binding site" evidence="1">
    <location>
        <position position="87"/>
    </location>
    <ligand>
        <name>Mg(2+)</name>
        <dbReference type="ChEBI" id="CHEBI:18420"/>
    </ligand>
</feature>
<feature type="binding site" evidence="1">
    <location>
        <position position="101"/>
    </location>
    <ligand>
        <name>Zn(2+)</name>
        <dbReference type="ChEBI" id="CHEBI:29105"/>
        <note>ligand shared between dimeric partners</note>
    </ligand>
</feature>
<feature type="binding site" evidence="1">
    <location>
        <position position="108"/>
    </location>
    <ligand>
        <name>Zn(2+)</name>
        <dbReference type="ChEBI" id="CHEBI:29105"/>
        <note>ligand shared between dimeric partners</note>
    </ligand>
</feature>
<name>HIS3_BURP0</name>
<dbReference type="EC" id="3.5.4.19" evidence="1"/>
<dbReference type="EMBL" id="CP000572">
    <property type="protein sequence ID" value="ABN91984.1"/>
    <property type="molecule type" value="Genomic_DNA"/>
</dbReference>
<dbReference type="RefSeq" id="WP_004201279.1">
    <property type="nucleotide sequence ID" value="NC_009076.1"/>
</dbReference>
<dbReference type="SMR" id="A3P026"/>
<dbReference type="GeneID" id="93061749"/>
<dbReference type="KEGG" id="bpl:BURPS1106A_3717"/>
<dbReference type="HOGENOM" id="CLU_048577_5_0_4"/>
<dbReference type="UniPathway" id="UPA00031">
    <property type="reaction ID" value="UER00008"/>
</dbReference>
<dbReference type="Proteomes" id="UP000006738">
    <property type="component" value="Chromosome I"/>
</dbReference>
<dbReference type="GO" id="GO:0005737">
    <property type="term" value="C:cytoplasm"/>
    <property type="evidence" value="ECO:0007669"/>
    <property type="project" value="UniProtKB-SubCell"/>
</dbReference>
<dbReference type="GO" id="GO:0000287">
    <property type="term" value="F:magnesium ion binding"/>
    <property type="evidence" value="ECO:0007669"/>
    <property type="project" value="UniProtKB-UniRule"/>
</dbReference>
<dbReference type="GO" id="GO:0004635">
    <property type="term" value="F:phosphoribosyl-AMP cyclohydrolase activity"/>
    <property type="evidence" value="ECO:0007669"/>
    <property type="project" value="UniProtKB-UniRule"/>
</dbReference>
<dbReference type="GO" id="GO:0008270">
    <property type="term" value="F:zinc ion binding"/>
    <property type="evidence" value="ECO:0007669"/>
    <property type="project" value="UniProtKB-UniRule"/>
</dbReference>
<dbReference type="GO" id="GO:0000105">
    <property type="term" value="P:L-histidine biosynthetic process"/>
    <property type="evidence" value="ECO:0007669"/>
    <property type="project" value="UniProtKB-UniRule"/>
</dbReference>
<dbReference type="FunFam" id="3.10.20.810:FF:000001">
    <property type="entry name" value="Histidine biosynthesis bifunctional protein HisIE"/>
    <property type="match status" value="1"/>
</dbReference>
<dbReference type="Gene3D" id="3.10.20.810">
    <property type="entry name" value="Phosphoribosyl-AMP cyclohydrolase"/>
    <property type="match status" value="1"/>
</dbReference>
<dbReference type="HAMAP" id="MF_01021">
    <property type="entry name" value="HisI"/>
    <property type="match status" value="1"/>
</dbReference>
<dbReference type="InterPro" id="IPR026660">
    <property type="entry name" value="PRA-CH"/>
</dbReference>
<dbReference type="InterPro" id="IPR002496">
    <property type="entry name" value="PRib_AMP_CycHydrolase_dom"/>
</dbReference>
<dbReference type="InterPro" id="IPR038019">
    <property type="entry name" value="PRib_AMP_CycHydrolase_sf"/>
</dbReference>
<dbReference type="NCBIfam" id="NF000768">
    <property type="entry name" value="PRK00051.1"/>
    <property type="match status" value="1"/>
</dbReference>
<dbReference type="PANTHER" id="PTHR42945">
    <property type="entry name" value="HISTIDINE BIOSYNTHESIS BIFUNCTIONAL PROTEIN"/>
    <property type="match status" value="1"/>
</dbReference>
<dbReference type="PANTHER" id="PTHR42945:SF1">
    <property type="entry name" value="HISTIDINE BIOSYNTHESIS BIFUNCTIONAL PROTEIN HIS7"/>
    <property type="match status" value="1"/>
</dbReference>
<dbReference type="Pfam" id="PF01502">
    <property type="entry name" value="PRA-CH"/>
    <property type="match status" value="1"/>
</dbReference>
<dbReference type="SUPFAM" id="SSF141734">
    <property type="entry name" value="HisI-like"/>
    <property type="match status" value="1"/>
</dbReference>
<reference key="1">
    <citation type="journal article" date="2010" name="Genome Biol. Evol.">
        <title>Continuing evolution of Burkholderia mallei through genome reduction and large-scale rearrangements.</title>
        <authorList>
            <person name="Losada L."/>
            <person name="Ronning C.M."/>
            <person name="DeShazer D."/>
            <person name="Woods D."/>
            <person name="Fedorova N."/>
            <person name="Kim H.S."/>
            <person name="Shabalina S.A."/>
            <person name="Pearson T.R."/>
            <person name="Brinkac L."/>
            <person name="Tan P."/>
            <person name="Nandi T."/>
            <person name="Crabtree J."/>
            <person name="Badger J."/>
            <person name="Beckstrom-Sternberg S."/>
            <person name="Saqib M."/>
            <person name="Schutzer S.E."/>
            <person name="Keim P."/>
            <person name="Nierman W.C."/>
        </authorList>
    </citation>
    <scope>NUCLEOTIDE SEQUENCE [LARGE SCALE GENOMIC DNA]</scope>
    <source>
        <strain>1106a</strain>
    </source>
</reference>
<proteinExistence type="inferred from homology"/>
<comment type="function">
    <text evidence="1">Catalyzes the hydrolysis of the adenine ring of phosphoribosyl-AMP.</text>
</comment>
<comment type="catalytic activity">
    <reaction evidence="1">
        <text>1-(5-phospho-beta-D-ribosyl)-5'-AMP + H2O = 1-(5-phospho-beta-D-ribosyl)-5-[(5-phospho-beta-D-ribosylamino)methylideneamino]imidazole-4-carboxamide</text>
        <dbReference type="Rhea" id="RHEA:20049"/>
        <dbReference type="ChEBI" id="CHEBI:15377"/>
        <dbReference type="ChEBI" id="CHEBI:58435"/>
        <dbReference type="ChEBI" id="CHEBI:59457"/>
        <dbReference type="EC" id="3.5.4.19"/>
    </reaction>
</comment>
<comment type="cofactor">
    <cofactor evidence="1">
        <name>Mg(2+)</name>
        <dbReference type="ChEBI" id="CHEBI:18420"/>
    </cofactor>
    <text evidence="1">Binds 1 Mg(2+) ion per subunit.</text>
</comment>
<comment type="cofactor">
    <cofactor evidence="1">
        <name>Zn(2+)</name>
        <dbReference type="ChEBI" id="CHEBI:29105"/>
    </cofactor>
    <text evidence="1">Binds 1 zinc ion per subunit.</text>
</comment>
<comment type="pathway">
    <text evidence="1">Amino-acid biosynthesis; L-histidine biosynthesis; L-histidine from 5-phospho-alpha-D-ribose 1-diphosphate: step 3/9.</text>
</comment>
<comment type="subunit">
    <text evidence="1">Homodimer.</text>
</comment>
<comment type="subcellular location">
    <subcellularLocation>
        <location evidence="1">Cytoplasm</location>
    </subcellularLocation>
</comment>
<comment type="similarity">
    <text evidence="1">Belongs to the PRA-CH family.</text>
</comment>
<keyword id="KW-0028">Amino-acid biosynthesis</keyword>
<keyword id="KW-0963">Cytoplasm</keyword>
<keyword id="KW-0368">Histidine biosynthesis</keyword>
<keyword id="KW-0378">Hydrolase</keyword>
<keyword id="KW-0460">Magnesium</keyword>
<keyword id="KW-0479">Metal-binding</keyword>
<keyword id="KW-0862">Zinc</keyword>
<gene>
    <name evidence="1" type="primary">hisI</name>
    <name type="ordered locus">BURPS1106A_3717</name>
</gene>
<accession>A3P026</accession>
<organism>
    <name type="scientific">Burkholderia pseudomallei (strain 1106a)</name>
    <dbReference type="NCBI Taxonomy" id="357348"/>
    <lineage>
        <taxon>Bacteria</taxon>
        <taxon>Pseudomonadati</taxon>
        <taxon>Pseudomonadota</taxon>
        <taxon>Betaproteobacteria</taxon>
        <taxon>Burkholderiales</taxon>
        <taxon>Burkholderiaceae</taxon>
        <taxon>Burkholderia</taxon>
        <taxon>pseudomallei group</taxon>
    </lineage>
</organism>
<sequence>MNAEAKPGDWLGKVRWDANGLVPVIAQDAATNDVLMFAWMNRDALAKTIELKRAVYYSRSRQRLWFKGEESGHVQHVHEVRLDCDEDVVLLKVEQVEGIACHTGRRSCFFQKFEGTVDDGEWVAVDPVLKDPEHIYK</sequence>
<protein>
    <recommendedName>
        <fullName evidence="1">Phosphoribosyl-AMP cyclohydrolase</fullName>
        <shortName evidence="1">PRA-CH</shortName>
        <ecNumber evidence="1">3.5.4.19</ecNumber>
    </recommendedName>
</protein>
<evidence type="ECO:0000255" key="1">
    <source>
        <dbReference type="HAMAP-Rule" id="MF_01021"/>
    </source>
</evidence>